<dbReference type="EC" id="7.2.1.4"/>
<dbReference type="EMBL" id="L77117">
    <property type="protein sequence ID" value="AAB98855.1"/>
    <property type="molecule type" value="Genomic_DNA"/>
</dbReference>
<dbReference type="PIR" id="B64406">
    <property type="entry name" value="B64406"/>
</dbReference>
<dbReference type="RefSeq" id="WP_010870364.1">
    <property type="nucleotide sequence ID" value="NC_000909.1"/>
</dbReference>
<dbReference type="SMR" id="Q58260"/>
<dbReference type="FunCoup" id="Q58260">
    <property type="interactions" value="91"/>
</dbReference>
<dbReference type="IntAct" id="Q58260">
    <property type="interactions" value="2"/>
</dbReference>
<dbReference type="MINT" id="Q58260"/>
<dbReference type="STRING" id="243232.MJ_0850"/>
<dbReference type="PaxDb" id="243232-MJ_0850"/>
<dbReference type="EnsemblBacteria" id="AAB98855">
    <property type="protein sequence ID" value="AAB98855"/>
    <property type="gene ID" value="MJ_0850"/>
</dbReference>
<dbReference type="GeneID" id="1451738"/>
<dbReference type="KEGG" id="mja:MJ_0850"/>
<dbReference type="eggNOG" id="arCOG04867">
    <property type="taxonomic scope" value="Archaea"/>
</dbReference>
<dbReference type="HOGENOM" id="CLU_171544_0_0_2"/>
<dbReference type="InParanoid" id="Q58260"/>
<dbReference type="OrthoDB" id="114034at2157"/>
<dbReference type="PhylomeDB" id="Q58260"/>
<dbReference type="UniPathway" id="UPA00640">
    <property type="reaction ID" value="UER00698"/>
</dbReference>
<dbReference type="Proteomes" id="UP000000805">
    <property type="component" value="Chromosome"/>
</dbReference>
<dbReference type="GO" id="GO:0005886">
    <property type="term" value="C:plasma membrane"/>
    <property type="evidence" value="ECO:0007669"/>
    <property type="project" value="UniProtKB-SubCell"/>
</dbReference>
<dbReference type="GO" id="GO:0030269">
    <property type="term" value="F:tetrahydromethanopterin S-methyltransferase activity"/>
    <property type="evidence" value="ECO:0007669"/>
    <property type="project" value="UniProtKB-UniRule"/>
</dbReference>
<dbReference type="GO" id="GO:0019386">
    <property type="term" value="P:methanogenesis, from carbon dioxide"/>
    <property type="evidence" value="ECO:0007669"/>
    <property type="project" value="UniProtKB-UniRule"/>
</dbReference>
<dbReference type="GO" id="GO:0032259">
    <property type="term" value="P:methylation"/>
    <property type="evidence" value="ECO:0007669"/>
    <property type="project" value="UniProtKB-KW"/>
</dbReference>
<dbReference type="GO" id="GO:0006730">
    <property type="term" value="P:one-carbon metabolic process"/>
    <property type="evidence" value="ECO:0007669"/>
    <property type="project" value="UniProtKB-UniRule"/>
</dbReference>
<dbReference type="HAMAP" id="MF_01094">
    <property type="entry name" value="MtrB"/>
    <property type="match status" value="1"/>
</dbReference>
<dbReference type="InterPro" id="IPR008690">
    <property type="entry name" value="MtrB_MeTrfase"/>
</dbReference>
<dbReference type="NCBIfam" id="TIGR04166">
    <property type="entry name" value="methano_MtrB"/>
    <property type="match status" value="1"/>
</dbReference>
<dbReference type="NCBIfam" id="NF002129">
    <property type="entry name" value="PRK00965.1"/>
    <property type="match status" value="1"/>
</dbReference>
<dbReference type="Pfam" id="PF05440">
    <property type="entry name" value="MtrB"/>
    <property type="match status" value="1"/>
</dbReference>
<dbReference type="PIRSF" id="PIRSF005518">
    <property type="entry name" value="MtrB"/>
    <property type="match status" value="1"/>
</dbReference>
<feature type="chain" id="PRO_0000147514" description="Tetrahydromethanopterin S-methyltransferase subunit B">
    <location>
        <begin position="1"/>
        <end position="103"/>
    </location>
</feature>
<feature type="transmembrane region" description="Helical" evidence="2">
    <location>
        <begin position="81"/>
        <end position="101"/>
    </location>
</feature>
<keyword id="KW-1003">Cell membrane</keyword>
<keyword id="KW-0472">Membrane</keyword>
<keyword id="KW-0484">Methanogenesis</keyword>
<keyword id="KW-0489">Methyltransferase</keyword>
<keyword id="KW-0554">One-carbon metabolism</keyword>
<keyword id="KW-1185">Reference proteome</keyword>
<keyword id="KW-0808">Transferase</keyword>
<keyword id="KW-1278">Translocase</keyword>
<keyword id="KW-0812">Transmembrane</keyword>
<keyword id="KW-1133">Transmembrane helix</keyword>
<protein>
    <recommendedName>
        <fullName>Tetrahydromethanopterin S-methyltransferase subunit B</fullName>
        <ecNumber>7.2.1.4</ecNumber>
    </recommendedName>
    <alternativeName>
        <fullName>N5-methyltetrahydromethanopterin--coenzyme M methyltransferase subunit B</fullName>
    </alternativeName>
</protein>
<accession>Q58260</accession>
<reference key="1">
    <citation type="journal article" date="1996" name="Science">
        <title>Complete genome sequence of the methanogenic archaeon, Methanococcus jannaschii.</title>
        <authorList>
            <person name="Bult C.J."/>
            <person name="White O."/>
            <person name="Olsen G.J."/>
            <person name="Zhou L."/>
            <person name="Fleischmann R.D."/>
            <person name="Sutton G.G."/>
            <person name="Blake J.A."/>
            <person name="FitzGerald L.M."/>
            <person name="Clayton R.A."/>
            <person name="Gocayne J.D."/>
            <person name="Kerlavage A.R."/>
            <person name="Dougherty B.A."/>
            <person name="Tomb J.-F."/>
            <person name="Adams M.D."/>
            <person name="Reich C.I."/>
            <person name="Overbeek R."/>
            <person name="Kirkness E.F."/>
            <person name="Weinstock K.G."/>
            <person name="Merrick J.M."/>
            <person name="Glodek A."/>
            <person name="Scott J.L."/>
            <person name="Geoghagen N.S.M."/>
            <person name="Weidman J.F."/>
            <person name="Fuhrmann J.L."/>
            <person name="Nguyen D."/>
            <person name="Utterback T.R."/>
            <person name="Kelley J.M."/>
            <person name="Peterson J.D."/>
            <person name="Sadow P.W."/>
            <person name="Hanna M.C."/>
            <person name="Cotton M.D."/>
            <person name="Roberts K.M."/>
            <person name="Hurst M.A."/>
            <person name="Kaine B.P."/>
            <person name="Borodovsky M."/>
            <person name="Klenk H.-P."/>
            <person name="Fraser C.M."/>
            <person name="Smith H.O."/>
            <person name="Woese C.R."/>
            <person name="Venter J.C."/>
        </authorList>
    </citation>
    <scope>NUCLEOTIDE SEQUENCE [LARGE SCALE GENOMIC DNA]</scope>
    <source>
        <strain>ATCC 43067 / DSM 2661 / JAL-1 / JCM 10045 / NBRC 100440</strain>
    </source>
</reference>
<organism>
    <name type="scientific">Methanocaldococcus jannaschii (strain ATCC 43067 / DSM 2661 / JAL-1 / JCM 10045 / NBRC 100440)</name>
    <name type="common">Methanococcus jannaschii</name>
    <dbReference type="NCBI Taxonomy" id="243232"/>
    <lineage>
        <taxon>Archaea</taxon>
        <taxon>Methanobacteriati</taxon>
        <taxon>Methanobacteriota</taxon>
        <taxon>Methanomada group</taxon>
        <taxon>Methanococci</taxon>
        <taxon>Methanococcales</taxon>
        <taxon>Methanocaldococcaceae</taxon>
        <taxon>Methanocaldococcus</taxon>
    </lineage>
</organism>
<name>MTRB_METJA</name>
<gene>
    <name type="primary">mtrB</name>
    <name type="ordered locus">MJ0850</name>
</gene>
<proteinExistence type="inferred from homology"/>
<evidence type="ECO:0000250" key="1"/>
<evidence type="ECO:0000255" key="2"/>
<evidence type="ECO:0000305" key="3"/>
<comment type="function">
    <text evidence="1">Part of a complex that catalyzes the formation of methyl-coenzyme M and tetrahydromethanopterin from coenzyme M and methyl-tetrahydromethanopterin. This is an energy-conserving, sodium-ion translocating step.</text>
</comment>
<comment type="catalytic activity">
    <reaction>
        <text>5-methyl-5,6,7,8-tetrahydromethanopterin + coenzyme M + 2 Na(+)(in) = 5,6,7,8-tetrahydromethanopterin + methyl-coenzyme M + 2 Na(+)(out)</text>
        <dbReference type="Rhea" id="RHEA:53492"/>
        <dbReference type="ChEBI" id="CHEBI:29101"/>
        <dbReference type="ChEBI" id="CHEBI:58103"/>
        <dbReference type="ChEBI" id="CHEBI:58116"/>
        <dbReference type="ChEBI" id="CHEBI:58286"/>
        <dbReference type="ChEBI" id="CHEBI:58319"/>
        <dbReference type="EC" id="7.2.1.4"/>
    </reaction>
</comment>
<comment type="pathway">
    <text>One-carbon metabolism; methanogenesis from CO(2); methyl-coenzyme M from 5,10-methylene-5,6,7,8-tetrahydromethanopterin: step 2/2.</text>
</comment>
<comment type="subunit">
    <text evidence="1">The complex is composed of 8 subunits; MtrA, MtrB, MtrC, MtrD, MtrE, MtrF, MtrG and MtrH.</text>
</comment>
<comment type="subcellular location">
    <subcellularLocation>
        <location evidence="3">Cell membrane</location>
        <topology evidence="3">Single-pass membrane protein</topology>
    </subcellularLocation>
</comment>
<comment type="similarity">
    <text evidence="3">Belongs to the MtrB family.</text>
</comment>
<sequence length="103" mass="11527">MATYVFIDQNIPLVYTVETGVITKGFGDLLFVDVSPIEEQIKKLETLVDAYEHSLDPRYPPLNSFPNRDGVYAISGYFKSAFFGFWIGLGIMALLAIILGVKF</sequence>